<evidence type="ECO:0000250" key="1"/>
<evidence type="ECO:0000305" key="2"/>
<keyword id="KW-0620">Polyamine biosynthesis</keyword>
<keyword id="KW-0745">Spermidine biosynthesis</keyword>
<keyword id="KW-0808">Transferase</keyword>
<reference key="1">
    <citation type="submission" date="1996-09" db="EMBL/GenBank/DDBJ databases">
        <authorList>
            <person name="Michael A.J."/>
        </authorList>
    </citation>
    <scope>NUCLEOTIDE SEQUENCE [MRNA]</scope>
    <source>
        <strain>D5/15</strain>
        <tissue>Root</tissue>
    </source>
</reference>
<comment type="catalytic activity">
    <reaction>
        <text>S-adenosyl 3-(methylsulfanyl)propylamine + putrescine = S-methyl-5'-thioadenosine + spermidine + H(+)</text>
        <dbReference type="Rhea" id="RHEA:12721"/>
        <dbReference type="ChEBI" id="CHEBI:15378"/>
        <dbReference type="ChEBI" id="CHEBI:17509"/>
        <dbReference type="ChEBI" id="CHEBI:57443"/>
        <dbReference type="ChEBI" id="CHEBI:57834"/>
        <dbReference type="ChEBI" id="CHEBI:326268"/>
        <dbReference type="EC" id="2.5.1.16"/>
    </reaction>
</comment>
<comment type="pathway">
    <text>Amine and polyamine biosynthesis; spermidine biosynthesis; spermidine from putrescine: step 1/1.</text>
</comment>
<comment type="similarity">
    <text evidence="2">Belongs to the spermidine/spermine synthase family.</text>
</comment>
<sequence>MEVANHNNNNNGCTNDKESPCISSVLPGWFSEISPLWPGEAHSLKVEKILFQGKSDYQDVMVFQSTTYGKVLVLDGVIQLTERDECAYQEMITHLPLCSIPNPKKVLVIGGGDGGVLREVSRHSSVEQIDICEIDKMVVEVAKQFFPDVAVGYEDPRVNLHIGDGVAFLKNVPAGTYDAVIVDSSDPIGPAQELFEKPFFETIARALRPGGVVSTQAESIWLHMHIIEEIVANCREIFKGSVNYAWTTVPTYPSGMIGFMLCSTEGPAVDFKNPINPIDDESHGQTIGPLKFYNSEIHQASFCLPSFAKRVIETKGK</sequence>
<name>SPDS2_DATST</name>
<dbReference type="EC" id="2.5.1.16"/>
<dbReference type="EMBL" id="Y08253">
    <property type="protein sequence ID" value="CAA69421.1"/>
    <property type="molecule type" value="mRNA"/>
</dbReference>
<dbReference type="SMR" id="Q96557"/>
<dbReference type="UniPathway" id="UPA00248">
    <property type="reaction ID" value="UER00314"/>
</dbReference>
<dbReference type="GO" id="GO:0005829">
    <property type="term" value="C:cytosol"/>
    <property type="evidence" value="ECO:0007669"/>
    <property type="project" value="TreeGrafter"/>
</dbReference>
<dbReference type="GO" id="GO:0004766">
    <property type="term" value="F:spermidine synthase activity"/>
    <property type="evidence" value="ECO:0007669"/>
    <property type="project" value="UniProtKB-EC"/>
</dbReference>
<dbReference type="GO" id="GO:0008295">
    <property type="term" value="P:spermidine biosynthetic process"/>
    <property type="evidence" value="ECO:0007669"/>
    <property type="project" value="UniProtKB-UniPathway"/>
</dbReference>
<dbReference type="CDD" id="cd02440">
    <property type="entry name" value="AdoMet_MTases"/>
    <property type="match status" value="1"/>
</dbReference>
<dbReference type="FunFam" id="2.30.140.10:FF:000003">
    <property type="entry name" value="Spermidine synthase 1"/>
    <property type="match status" value="1"/>
</dbReference>
<dbReference type="FunFam" id="3.40.50.150:FF:000048">
    <property type="entry name" value="Spermidine synthase 1"/>
    <property type="match status" value="1"/>
</dbReference>
<dbReference type="Gene3D" id="2.30.140.10">
    <property type="entry name" value="Spermidine synthase, tetramerisation domain"/>
    <property type="match status" value="1"/>
</dbReference>
<dbReference type="Gene3D" id="3.40.50.150">
    <property type="entry name" value="Vaccinia Virus protein VP39"/>
    <property type="match status" value="1"/>
</dbReference>
<dbReference type="HAMAP" id="MF_00198">
    <property type="entry name" value="Spermidine_synth"/>
    <property type="match status" value="1"/>
</dbReference>
<dbReference type="InterPro" id="IPR030374">
    <property type="entry name" value="PABS"/>
</dbReference>
<dbReference type="InterPro" id="IPR030373">
    <property type="entry name" value="PABS_CS"/>
</dbReference>
<dbReference type="InterPro" id="IPR029063">
    <property type="entry name" value="SAM-dependent_MTases_sf"/>
</dbReference>
<dbReference type="InterPro" id="IPR001045">
    <property type="entry name" value="Spermi_synthase"/>
</dbReference>
<dbReference type="InterPro" id="IPR030668">
    <property type="entry name" value="Spermi_synthase_euk"/>
</dbReference>
<dbReference type="InterPro" id="IPR035246">
    <property type="entry name" value="Spermidine_synt_N"/>
</dbReference>
<dbReference type="InterPro" id="IPR037163">
    <property type="entry name" value="Spermidine_synt_N_sf"/>
</dbReference>
<dbReference type="NCBIfam" id="NF002010">
    <property type="entry name" value="PRK00811.1"/>
    <property type="match status" value="1"/>
</dbReference>
<dbReference type="NCBIfam" id="TIGR00417">
    <property type="entry name" value="speE"/>
    <property type="match status" value="1"/>
</dbReference>
<dbReference type="PANTHER" id="PTHR11558:SF43">
    <property type="entry name" value="SPERMIDINE SYNTHASE"/>
    <property type="match status" value="1"/>
</dbReference>
<dbReference type="PANTHER" id="PTHR11558">
    <property type="entry name" value="SPERMIDINE/SPERMINE SYNTHASE"/>
    <property type="match status" value="1"/>
</dbReference>
<dbReference type="Pfam" id="PF17284">
    <property type="entry name" value="Spermine_synt_N"/>
    <property type="match status" value="1"/>
</dbReference>
<dbReference type="Pfam" id="PF01564">
    <property type="entry name" value="Spermine_synth"/>
    <property type="match status" value="1"/>
</dbReference>
<dbReference type="PIRSF" id="PIRSF000502">
    <property type="entry name" value="Spermidine_synth"/>
    <property type="match status" value="1"/>
</dbReference>
<dbReference type="SUPFAM" id="SSF53335">
    <property type="entry name" value="S-adenosyl-L-methionine-dependent methyltransferases"/>
    <property type="match status" value="1"/>
</dbReference>
<dbReference type="PROSITE" id="PS01330">
    <property type="entry name" value="PABS_1"/>
    <property type="match status" value="1"/>
</dbReference>
<dbReference type="PROSITE" id="PS51006">
    <property type="entry name" value="PABS_2"/>
    <property type="match status" value="1"/>
</dbReference>
<feature type="chain" id="PRO_0000156452" description="Spermidine synthase 2">
    <location>
        <begin position="1"/>
        <end position="317"/>
    </location>
</feature>
<feature type="domain" description="PABS">
    <location>
        <begin position="27"/>
        <end position="264"/>
    </location>
</feature>
<feature type="active site" description="Proton acceptor" evidence="1">
    <location>
        <position position="183"/>
    </location>
</feature>
<feature type="binding site" evidence="1">
    <location>
        <position position="58"/>
    </location>
    <ligand>
        <name>S-adenosyl 3-(methylsulfanyl)propylamine</name>
        <dbReference type="ChEBI" id="CHEBI:57443"/>
    </ligand>
</feature>
<feature type="binding site" evidence="1">
    <location>
        <position position="88"/>
    </location>
    <ligand>
        <name>putrescine</name>
        <dbReference type="ChEBI" id="CHEBI:326268"/>
    </ligand>
</feature>
<feature type="binding site" evidence="1">
    <location>
        <position position="89"/>
    </location>
    <ligand>
        <name>S-adenosyl 3-(methylsulfanyl)propylamine</name>
        <dbReference type="ChEBI" id="CHEBI:57443"/>
    </ligand>
</feature>
<feature type="binding site" evidence="1">
    <location>
        <position position="113"/>
    </location>
    <ligand>
        <name>S-adenosyl 3-(methylsulfanyl)propylamine</name>
        <dbReference type="ChEBI" id="CHEBI:57443"/>
    </ligand>
</feature>
<feature type="binding site" evidence="1">
    <location>
        <position position="133"/>
    </location>
    <ligand>
        <name>S-adenosyl 3-(methylsulfanyl)propylamine</name>
        <dbReference type="ChEBI" id="CHEBI:57443"/>
    </ligand>
</feature>
<feature type="binding site" evidence="1">
    <location>
        <begin position="164"/>
        <end position="165"/>
    </location>
    <ligand>
        <name>S-adenosyl 3-(methylsulfanyl)propylamine</name>
        <dbReference type="ChEBI" id="CHEBI:57443"/>
    </ligand>
</feature>
<feature type="binding site" evidence="1">
    <location>
        <begin position="183"/>
        <end position="186"/>
    </location>
    <ligand>
        <name>putrescine</name>
        <dbReference type="ChEBI" id="CHEBI:326268"/>
    </ligand>
</feature>
<feature type="binding site" evidence="1">
    <location>
        <position position="183"/>
    </location>
    <ligand>
        <name>S-adenosyl 3-(methylsulfanyl)propylamine</name>
        <dbReference type="ChEBI" id="CHEBI:57443"/>
    </ligand>
</feature>
<feature type="binding site" evidence="1">
    <location>
        <position position="252"/>
    </location>
    <ligand>
        <name>putrescine</name>
        <dbReference type="ChEBI" id="CHEBI:326268"/>
    </ligand>
</feature>
<proteinExistence type="evidence at transcript level"/>
<organism>
    <name type="scientific">Datura stramonium</name>
    <name type="common">Jimsonweed</name>
    <name type="synonym">Common thornapple</name>
    <dbReference type="NCBI Taxonomy" id="4076"/>
    <lineage>
        <taxon>Eukaryota</taxon>
        <taxon>Viridiplantae</taxon>
        <taxon>Streptophyta</taxon>
        <taxon>Embryophyta</taxon>
        <taxon>Tracheophyta</taxon>
        <taxon>Spermatophyta</taxon>
        <taxon>Magnoliopsida</taxon>
        <taxon>eudicotyledons</taxon>
        <taxon>Gunneridae</taxon>
        <taxon>Pentapetalae</taxon>
        <taxon>asterids</taxon>
        <taxon>lamiids</taxon>
        <taxon>Solanales</taxon>
        <taxon>Solanaceae</taxon>
        <taxon>Solanoideae</taxon>
        <taxon>Datureae</taxon>
        <taxon>Datura</taxon>
    </lineage>
</organism>
<protein>
    <recommendedName>
        <fullName>Spermidine synthase 2</fullName>
        <shortName>SPDSY 2</shortName>
        <ecNumber>2.5.1.16</ecNumber>
    </recommendedName>
    <alternativeName>
        <fullName>Putrescine aminopropyltransferase 2</fullName>
    </alternativeName>
</protein>
<accession>Q96557</accession>